<feature type="chain" id="PRO_0000342324" description="Uncharacterized protein 56B">
    <location>
        <begin position="1"/>
        <end position="56"/>
    </location>
</feature>
<feature type="strand" evidence="1">
    <location>
        <begin position="13"/>
        <end position="21"/>
    </location>
</feature>
<feature type="helix" evidence="1">
    <location>
        <begin position="22"/>
        <end position="34"/>
    </location>
</feature>
<feature type="helix" evidence="1">
    <location>
        <begin position="39"/>
        <end position="54"/>
    </location>
</feature>
<organismHost>
    <name type="scientific">Saccharolobus islandicus</name>
    <name type="common">Sulfolobus islandicus</name>
    <dbReference type="NCBI Taxonomy" id="43080"/>
</organismHost>
<keyword id="KW-0002">3D-structure</keyword>
<keyword id="KW-1185">Reference proteome</keyword>
<organism>
    <name type="scientific">Sulfolobus islandicus rod-shaped virus 1</name>
    <name type="common">SIRV-1</name>
    <name type="synonym">Sulfolobus virus SIRV-1</name>
    <dbReference type="NCBI Taxonomy" id="157898"/>
    <lineage>
        <taxon>Viruses</taxon>
        <taxon>Adnaviria</taxon>
        <taxon>Zilligvirae</taxon>
        <taxon>Taleaviricota</taxon>
        <taxon>Tokiviricetes</taxon>
        <taxon>Ligamenvirales</taxon>
        <taxon>Rudiviridae</taxon>
        <taxon>Icerudivirus</taxon>
        <taxon>Icerudivirus SIRV1</taxon>
    </lineage>
</organism>
<evidence type="ECO:0007829" key="1">
    <source>
        <dbReference type="PDB" id="2KEL"/>
    </source>
</evidence>
<protein>
    <recommendedName>
        <fullName>Uncharacterized protein 56B</fullName>
    </recommendedName>
</protein>
<reference key="1">
    <citation type="journal article" date="2001" name="Virology">
        <title>Sequences and replication of genomes of the archaeal rudiviruses SIRV1 and SIRV2: relationships to the archaeal lipothrixvirus SIFV and some eukaryal viruses.</title>
        <authorList>
            <person name="Peng X."/>
            <person name="Blum H."/>
            <person name="She Q."/>
            <person name="Mallok S."/>
            <person name="Bruegger K."/>
            <person name="Garrett R.A."/>
            <person name="Zillig W."/>
            <person name="Prangishvili D."/>
        </authorList>
    </citation>
    <scope>NUCLEOTIDE SEQUENCE [LARGE SCALE GENOMIC DNA]</scope>
    <source>
        <strain>Isolate variant VIII</strain>
    </source>
</reference>
<reference key="2">
    <citation type="journal article" date="2004" name="Mol. Microbiol.">
        <title>Multiple variants of the archaeal DNA rudivirus SIRV1 in a single host and a novel mechanism of genomic variation.</title>
        <authorList>
            <person name="Peng X."/>
            <person name="Kessler A."/>
            <person name="Phan H."/>
            <person name="Garrett R.A."/>
            <person name="Prangishvili D."/>
        </authorList>
    </citation>
    <scope>NUCLEOTIDE SEQUENCE [LARGE SCALE GENOMIC DNA]</scope>
    <source>
        <strain>Isolate variant XX</strain>
    </source>
</reference>
<accession>Q8QL46</accession>
<accession>Q5TJB0</accession>
<sequence length="56" mass="6621">MQTQEQSQKKKQKAVFGIYMDKDLKTRLKVYCAKNNLQLTQAIEEAIKEYLQKRNG</sequence>
<dbReference type="EMBL" id="AJ414696">
    <property type="protein sequence ID" value="CAC93963.1"/>
    <property type="molecule type" value="Genomic_DNA"/>
</dbReference>
<dbReference type="EMBL" id="AJ748296">
    <property type="protein sequence ID" value="CAG38828.1"/>
    <property type="molecule type" value="Genomic_DNA"/>
</dbReference>
<dbReference type="RefSeq" id="NP_666596.1">
    <property type="nucleotide sequence ID" value="NC_004087.1"/>
</dbReference>
<dbReference type="PDB" id="2KEL">
    <property type="method" value="NMR"/>
    <property type="chains" value="A/B=1-56"/>
</dbReference>
<dbReference type="PDBsum" id="2KEL"/>
<dbReference type="BMRB" id="Q8QL46"/>
<dbReference type="SMR" id="Q8QL46"/>
<dbReference type="KEGG" id="vg:951386"/>
<dbReference type="OrthoDB" id="27395at10239"/>
<dbReference type="EvolutionaryTrace" id="Q8QL46"/>
<dbReference type="Proteomes" id="UP000002270">
    <property type="component" value="Genome"/>
</dbReference>
<dbReference type="Proteomes" id="UP000223181">
    <property type="component" value="Segment"/>
</dbReference>
<dbReference type="GO" id="GO:0006355">
    <property type="term" value="P:regulation of DNA-templated transcription"/>
    <property type="evidence" value="ECO:0007669"/>
    <property type="project" value="InterPro"/>
</dbReference>
<dbReference type="Gene3D" id="1.10.1220.10">
    <property type="entry name" value="Met repressor-like"/>
    <property type="match status" value="1"/>
</dbReference>
<dbReference type="InterPro" id="IPR049123">
    <property type="entry name" value="56B_RHH"/>
</dbReference>
<dbReference type="InterPro" id="IPR013321">
    <property type="entry name" value="Arc_rbn_hlx_hlx"/>
</dbReference>
<dbReference type="InterPro" id="IPR010985">
    <property type="entry name" value="Ribbon_hlx_hlx"/>
</dbReference>
<dbReference type="Pfam" id="PF21432">
    <property type="entry name" value="56B_RHH"/>
    <property type="match status" value="1"/>
</dbReference>
<dbReference type="SUPFAM" id="SSF47598">
    <property type="entry name" value="Ribbon-helix-helix"/>
    <property type="match status" value="1"/>
</dbReference>
<gene>
    <name type="ORF">56B</name>
</gene>
<name>Y56B_SIRV1</name>
<proteinExistence type="evidence at protein level"/>